<sequence length="12" mass="1238">APVPGLSPFRVV</sequence>
<evidence type="ECO:0000269" key="1">
    <source>
    </source>
</evidence>
<evidence type="ECO:0000305" key="2"/>
<keyword id="KW-0878">Amphibian defense peptide</keyword>
<keyword id="KW-0903">Direct protein sequencing</keyword>
<keyword id="KW-1213">G-protein coupled receptor impairing toxin</keyword>
<keyword id="KW-0964">Secreted</keyword>
<keyword id="KW-0800">Toxin</keyword>
<keyword id="KW-0838">Vasoactive</keyword>
<keyword id="KW-0840">Vasodilator</keyword>
<proteinExistence type="evidence at protein level"/>
<organism>
    <name type="scientific">Ascaphus truei</name>
    <name type="common">Coastal tailed frog</name>
    <dbReference type="NCBI Taxonomy" id="8439"/>
    <lineage>
        <taxon>Eukaryota</taxon>
        <taxon>Metazoa</taxon>
        <taxon>Chordata</taxon>
        <taxon>Craniata</taxon>
        <taxon>Vertebrata</taxon>
        <taxon>Euteleostomi</taxon>
        <taxon>Amphibia</taxon>
        <taxon>Batrachia</taxon>
        <taxon>Anura</taxon>
        <taxon>Ascaphidae</taxon>
        <taxon>Ascaphus</taxon>
    </lineage>
</organism>
<dbReference type="GO" id="GO:0005576">
    <property type="term" value="C:extracellular region"/>
    <property type="evidence" value="ECO:0000314"/>
    <property type="project" value="UniProtKB"/>
</dbReference>
<dbReference type="GO" id="GO:0090729">
    <property type="term" value="F:toxin activity"/>
    <property type="evidence" value="ECO:0007669"/>
    <property type="project" value="UniProtKB-KW"/>
</dbReference>
<dbReference type="GO" id="GO:0097746">
    <property type="term" value="P:blood vessel diameter maintenance"/>
    <property type="evidence" value="ECO:0000314"/>
    <property type="project" value="UniProtKB"/>
</dbReference>
<dbReference type="GO" id="GO:0006952">
    <property type="term" value="P:defense response"/>
    <property type="evidence" value="ECO:0000314"/>
    <property type="project" value="UniProtKB"/>
</dbReference>
<dbReference type="GO" id="GO:0042311">
    <property type="term" value="P:vasodilation"/>
    <property type="evidence" value="ECO:0007669"/>
    <property type="project" value="UniProtKB-KW"/>
</dbReference>
<feature type="peptide" id="PRO_0000233938" description="Bradykinin-like peptide AV-12" evidence="1">
    <location>
        <begin position="1"/>
        <end position="12"/>
    </location>
</feature>
<reference evidence="2" key="1">
    <citation type="journal article" date="2005" name="Gen. Comp. Endocrinol.">
        <title>Bradykinin-related peptides and tryptophyllins in the skin secretions of the most primitive extant frog, Ascaphus truei.</title>
        <authorList>
            <person name="Conlon J.M."/>
            <person name="Jouenne T."/>
            <person name="Cosette P."/>
            <person name="Cosquer D."/>
            <person name="Vaudry H."/>
            <person name="Taylor C.K."/>
            <person name="Abel P.W."/>
        </authorList>
    </citation>
    <scope>PROTEIN SEQUENCE</scope>
    <scope>FUNCTION</scope>
    <scope>SUBCELLULAR LOCATION</scope>
    <scope>TISSUE SPECIFICITY</scope>
    <scope>MASS SPECTROMETRY</scope>
    <source>
        <tissue evidence="1">Skin secretion</tissue>
    </source>
</reference>
<accession>P84823</accession>
<protein>
    <recommendedName>
        <fullName>Bradykinin-like peptide AV-12</fullName>
    </recommendedName>
</protein>
<comment type="function">
    <text evidence="1">Induces relaxation of mouse trachea that has been precontracted with methacholine. May induce relaxation of arterial smooth muscle. May target bradykinin receptors (BDKRB).</text>
</comment>
<comment type="subcellular location">
    <subcellularLocation>
        <location evidence="1">Secreted</location>
    </subcellularLocation>
</comment>
<comment type="tissue specificity">
    <text evidence="1">Expressed by the skin glands.</text>
</comment>
<comment type="mass spectrometry" mass="1237.7" method="MALDI" evidence="1"/>
<comment type="similarity">
    <text evidence="2">Belongs to the bradykinin-related peptide family.</text>
</comment>
<name>BRK12_ASCTR</name>